<accession>Q11RW8</accession>
<protein>
    <recommendedName>
        <fullName evidence="1">Large ribosomal subunit protein bL9</fullName>
    </recommendedName>
    <alternativeName>
        <fullName evidence="2">50S ribosomal protein L9</fullName>
    </alternativeName>
</protein>
<organism>
    <name type="scientific">Cytophaga hutchinsonii (strain ATCC 33406 / DSM 1761 / CIP 103989 / NBRC 15051 / NCIMB 9469 / D465)</name>
    <dbReference type="NCBI Taxonomy" id="269798"/>
    <lineage>
        <taxon>Bacteria</taxon>
        <taxon>Pseudomonadati</taxon>
        <taxon>Bacteroidota</taxon>
        <taxon>Cytophagia</taxon>
        <taxon>Cytophagales</taxon>
        <taxon>Cytophagaceae</taxon>
        <taxon>Cytophaga</taxon>
    </lineage>
</organism>
<evidence type="ECO:0000255" key="1">
    <source>
        <dbReference type="HAMAP-Rule" id="MF_00503"/>
    </source>
</evidence>
<evidence type="ECO:0000305" key="2"/>
<gene>
    <name evidence="1" type="primary">rplI</name>
    <name type="ordered locus">CHU_2593</name>
</gene>
<dbReference type="EMBL" id="CP000383">
    <property type="protein sequence ID" value="ABG59846.1"/>
    <property type="molecule type" value="Genomic_DNA"/>
</dbReference>
<dbReference type="RefSeq" id="WP_011585956.1">
    <property type="nucleotide sequence ID" value="NC_008255.1"/>
</dbReference>
<dbReference type="SMR" id="Q11RW8"/>
<dbReference type="STRING" id="269798.CHU_2593"/>
<dbReference type="KEGG" id="chu:CHU_2593"/>
<dbReference type="eggNOG" id="COG0359">
    <property type="taxonomic scope" value="Bacteria"/>
</dbReference>
<dbReference type="HOGENOM" id="CLU_078938_3_0_10"/>
<dbReference type="OrthoDB" id="9788336at2"/>
<dbReference type="Proteomes" id="UP000001822">
    <property type="component" value="Chromosome"/>
</dbReference>
<dbReference type="GO" id="GO:1990904">
    <property type="term" value="C:ribonucleoprotein complex"/>
    <property type="evidence" value="ECO:0007669"/>
    <property type="project" value="UniProtKB-KW"/>
</dbReference>
<dbReference type="GO" id="GO:0005840">
    <property type="term" value="C:ribosome"/>
    <property type="evidence" value="ECO:0007669"/>
    <property type="project" value="UniProtKB-KW"/>
</dbReference>
<dbReference type="GO" id="GO:0019843">
    <property type="term" value="F:rRNA binding"/>
    <property type="evidence" value="ECO:0007669"/>
    <property type="project" value="UniProtKB-UniRule"/>
</dbReference>
<dbReference type="GO" id="GO:0003735">
    <property type="term" value="F:structural constituent of ribosome"/>
    <property type="evidence" value="ECO:0007669"/>
    <property type="project" value="InterPro"/>
</dbReference>
<dbReference type="GO" id="GO:0006412">
    <property type="term" value="P:translation"/>
    <property type="evidence" value="ECO:0007669"/>
    <property type="project" value="UniProtKB-UniRule"/>
</dbReference>
<dbReference type="Gene3D" id="3.10.430.100">
    <property type="entry name" value="Ribosomal protein L9, C-terminal domain"/>
    <property type="match status" value="1"/>
</dbReference>
<dbReference type="Gene3D" id="3.40.5.10">
    <property type="entry name" value="Ribosomal protein L9, N-terminal domain"/>
    <property type="match status" value="1"/>
</dbReference>
<dbReference type="HAMAP" id="MF_00503">
    <property type="entry name" value="Ribosomal_bL9"/>
    <property type="match status" value="1"/>
</dbReference>
<dbReference type="InterPro" id="IPR000244">
    <property type="entry name" value="Ribosomal_bL9"/>
</dbReference>
<dbReference type="InterPro" id="IPR009027">
    <property type="entry name" value="Ribosomal_bL9/RNase_H1_N"/>
</dbReference>
<dbReference type="InterPro" id="IPR020594">
    <property type="entry name" value="Ribosomal_bL9_bac/chp"/>
</dbReference>
<dbReference type="InterPro" id="IPR020069">
    <property type="entry name" value="Ribosomal_bL9_C"/>
</dbReference>
<dbReference type="InterPro" id="IPR036791">
    <property type="entry name" value="Ribosomal_bL9_C_sf"/>
</dbReference>
<dbReference type="InterPro" id="IPR020070">
    <property type="entry name" value="Ribosomal_bL9_N"/>
</dbReference>
<dbReference type="InterPro" id="IPR036935">
    <property type="entry name" value="Ribosomal_bL9_N_sf"/>
</dbReference>
<dbReference type="NCBIfam" id="TIGR00158">
    <property type="entry name" value="L9"/>
    <property type="match status" value="1"/>
</dbReference>
<dbReference type="PANTHER" id="PTHR21368">
    <property type="entry name" value="50S RIBOSOMAL PROTEIN L9"/>
    <property type="match status" value="1"/>
</dbReference>
<dbReference type="Pfam" id="PF03948">
    <property type="entry name" value="Ribosomal_L9_C"/>
    <property type="match status" value="1"/>
</dbReference>
<dbReference type="Pfam" id="PF01281">
    <property type="entry name" value="Ribosomal_L9_N"/>
    <property type="match status" value="1"/>
</dbReference>
<dbReference type="SUPFAM" id="SSF55658">
    <property type="entry name" value="L9 N-domain-like"/>
    <property type="match status" value="1"/>
</dbReference>
<dbReference type="SUPFAM" id="SSF55653">
    <property type="entry name" value="Ribosomal protein L9 C-domain"/>
    <property type="match status" value="1"/>
</dbReference>
<dbReference type="PROSITE" id="PS00651">
    <property type="entry name" value="RIBOSOMAL_L9"/>
    <property type="match status" value="1"/>
</dbReference>
<sequence length="147" mass="15700">MEVILKEDIKGLGYKNDLVQVKAGYGNNFLIPRGYAINATVSAKKVVAENIKQAAHKAEKLKKDAVATSEKIAGLALEIAAKVGDTGKIFGAVTSLQISDALAKKGISVDRKKIAFKGDVKDAGEHTALIDLHKEVKVELKFTVVAE</sequence>
<reference key="1">
    <citation type="journal article" date="2007" name="Appl. Environ. Microbiol.">
        <title>Genome sequence of the cellulolytic gliding bacterium Cytophaga hutchinsonii.</title>
        <authorList>
            <person name="Xie G."/>
            <person name="Bruce D.C."/>
            <person name="Challacombe J.F."/>
            <person name="Chertkov O."/>
            <person name="Detter J.C."/>
            <person name="Gilna P."/>
            <person name="Han C.S."/>
            <person name="Lucas S."/>
            <person name="Misra M."/>
            <person name="Myers G.L."/>
            <person name="Richardson P."/>
            <person name="Tapia R."/>
            <person name="Thayer N."/>
            <person name="Thompson L.S."/>
            <person name="Brettin T.S."/>
            <person name="Henrissat B."/>
            <person name="Wilson D.B."/>
            <person name="McBride M.J."/>
        </authorList>
    </citation>
    <scope>NUCLEOTIDE SEQUENCE [LARGE SCALE GENOMIC DNA]</scope>
    <source>
        <strain>ATCC 33406 / DSM 1761 / JCM 20678 / CIP 103989 / IAM 12607 / NBRC 15051 / NCIMB 9469 / D465</strain>
    </source>
</reference>
<feature type="chain" id="PRO_0000258451" description="Large ribosomal subunit protein bL9">
    <location>
        <begin position="1"/>
        <end position="147"/>
    </location>
</feature>
<proteinExistence type="inferred from homology"/>
<keyword id="KW-1185">Reference proteome</keyword>
<keyword id="KW-0687">Ribonucleoprotein</keyword>
<keyword id="KW-0689">Ribosomal protein</keyword>
<keyword id="KW-0694">RNA-binding</keyword>
<keyword id="KW-0699">rRNA-binding</keyword>
<comment type="function">
    <text evidence="1">Binds to the 23S rRNA.</text>
</comment>
<comment type="similarity">
    <text evidence="1">Belongs to the bacterial ribosomal protein bL9 family.</text>
</comment>
<name>RL9_CYTH3</name>